<dbReference type="EC" id="3.4.19.13" evidence="1"/>
<dbReference type="EC" id="2.3.2.2" evidence="1"/>
<dbReference type="EMBL" id="EQ963480">
    <property type="protein sequence ID" value="EED49422.1"/>
    <property type="molecule type" value="Genomic_DNA"/>
</dbReference>
<dbReference type="RefSeq" id="XP_002381323.1">
    <property type="nucleotide sequence ID" value="XM_002381282.1"/>
</dbReference>
<dbReference type="SMR" id="B8NM71"/>
<dbReference type="STRING" id="332952.B8NM71"/>
<dbReference type="MEROPS" id="T03.011"/>
<dbReference type="GlyCosmos" id="B8NM71">
    <property type="glycosylation" value="4 sites, No reported glycans"/>
</dbReference>
<dbReference type="EnsemblFungi" id="EED49422">
    <property type="protein sequence ID" value="EED49422"/>
    <property type="gene ID" value="AFLA_095030"/>
</dbReference>
<dbReference type="VEuPathDB" id="FungiDB:AFLA_009740"/>
<dbReference type="eggNOG" id="KOG2410">
    <property type="taxonomic scope" value="Eukaryota"/>
</dbReference>
<dbReference type="HOGENOM" id="CLU_014813_4_0_1"/>
<dbReference type="OMA" id="APACTTH"/>
<dbReference type="GO" id="GO:0005886">
    <property type="term" value="C:plasma membrane"/>
    <property type="evidence" value="ECO:0007669"/>
    <property type="project" value="TreeGrafter"/>
</dbReference>
<dbReference type="GO" id="GO:0036374">
    <property type="term" value="F:glutathione hydrolase activity"/>
    <property type="evidence" value="ECO:0007669"/>
    <property type="project" value="UniProtKB-EC"/>
</dbReference>
<dbReference type="GO" id="GO:0103068">
    <property type="term" value="F:leukotriene C4 gamma-glutamyl transferase activity"/>
    <property type="evidence" value="ECO:0007669"/>
    <property type="project" value="UniProtKB-EC"/>
</dbReference>
<dbReference type="GO" id="GO:0006751">
    <property type="term" value="P:glutathione catabolic process"/>
    <property type="evidence" value="ECO:0007669"/>
    <property type="project" value="InterPro"/>
</dbReference>
<dbReference type="GO" id="GO:0006508">
    <property type="term" value="P:proteolysis"/>
    <property type="evidence" value="ECO:0007669"/>
    <property type="project" value="UniProtKB-KW"/>
</dbReference>
<dbReference type="FunFam" id="1.10.246.130:FF:000005">
    <property type="entry name" value="Gamma-glutamyltranspeptidase 1, putative"/>
    <property type="match status" value="1"/>
</dbReference>
<dbReference type="Gene3D" id="1.10.246.130">
    <property type="match status" value="1"/>
</dbReference>
<dbReference type="Gene3D" id="3.60.20.40">
    <property type="match status" value="1"/>
</dbReference>
<dbReference type="InterPro" id="IPR043138">
    <property type="entry name" value="GGT_lsub_C"/>
</dbReference>
<dbReference type="InterPro" id="IPR000101">
    <property type="entry name" value="GGT_peptidase"/>
</dbReference>
<dbReference type="InterPro" id="IPR043137">
    <property type="entry name" value="GGT_ssub"/>
</dbReference>
<dbReference type="InterPro" id="IPR029055">
    <property type="entry name" value="Ntn_hydrolases_N"/>
</dbReference>
<dbReference type="NCBIfam" id="TIGR00066">
    <property type="entry name" value="g_glut_trans"/>
    <property type="match status" value="1"/>
</dbReference>
<dbReference type="PANTHER" id="PTHR11686">
    <property type="entry name" value="GAMMA GLUTAMYL TRANSPEPTIDASE"/>
    <property type="match status" value="1"/>
</dbReference>
<dbReference type="PANTHER" id="PTHR11686:SF62">
    <property type="entry name" value="GLUTATHIONE HYDROLASE"/>
    <property type="match status" value="1"/>
</dbReference>
<dbReference type="Pfam" id="PF01019">
    <property type="entry name" value="G_glu_transpept"/>
    <property type="match status" value="1"/>
</dbReference>
<dbReference type="PRINTS" id="PR01210">
    <property type="entry name" value="GGTRANSPTASE"/>
</dbReference>
<dbReference type="SUPFAM" id="SSF56235">
    <property type="entry name" value="N-terminal nucleophile aminohydrolases (Ntn hydrolases)"/>
    <property type="match status" value="1"/>
</dbReference>
<evidence type="ECO:0000250" key="1">
    <source>
        <dbReference type="UniProtKB" id="P19440"/>
    </source>
</evidence>
<evidence type="ECO:0000255" key="2"/>
<evidence type="ECO:0000255" key="3">
    <source>
        <dbReference type="PROSITE-ProRule" id="PRU00498"/>
    </source>
</evidence>
<evidence type="ECO:0000269" key="4">
    <source>
    </source>
</evidence>
<evidence type="ECO:0000269" key="5">
    <source>
    </source>
</evidence>
<evidence type="ECO:0000269" key="6">
    <source>
    </source>
</evidence>
<evidence type="ECO:0000303" key="7">
    <source>
    </source>
</evidence>
<evidence type="ECO:0000305" key="8"/>
<gene>
    <name evidence="7" type="primary">ustH</name>
    <name type="ORF">AFLA_095030</name>
</gene>
<keyword id="KW-0012">Acyltransferase</keyword>
<keyword id="KW-0325">Glycoprotein</keyword>
<keyword id="KW-0378">Hydrolase</keyword>
<keyword id="KW-0645">Protease</keyword>
<keyword id="KW-0732">Signal</keyword>
<keyword id="KW-0808">Transferase</keyword>
<organism>
    <name type="scientific">Aspergillus flavus (strain ATCC 200026 / FGSC A1120 / IAM 13836 / NRRL 3357 / JCM 12722 / SRRC 167)</name>
    <dbReference type="NCBI Taxonomy" id="332952"/>
    <lineage>
        <taxon>Eukaryota</taxon>
        <taxon>Fungi</taxon>
        <taxon>Dikarya</taxon>
        <taxon>Ascomycota</taxon>
        <taxon>Pezizomycotina</taxon>
        <taxon>Eurotiomycetes</taxon>
        <taxon>Eurotiomycetidae</taxon>
        <taxon>Eurotiales</taxon>
        <taxon>Aspergillaceae</taxon>
        <taxon>Aspergillus</taxon>
        <taxon>Aspergillus subgen. Circumdati</taxon>
    </lineage>
</organism>
<feature type="signal peptide" evidence="2">
    <location>
        <begin position="1"/>
        <end position="41"/>
    </location>
</feature>
<feature type="chain" id="PRO_0000437297" description="Glutathione hydrolase" evidence="2">
    <location>
        <begin position="42"/>
        <end position="591"/>
    </location>
</feature>
<feature type="active site" description="Nucleophile" evidence="1">
    <location>
        <position position="393"/>
    </location>
</feature>
<feature type="binding site" evidence="1">
    <location>
        <position position="122"/>
    </location>
    <ligand>
        <name>L-glutamate</name>
        <dbReference type="ChEBI" id="CHEBI:29985"/>
    </ligand>
</feature>
<feature type="binding site" evidence="1">
    <location>
        <position position="411"/>
    </location>
    <ligand>
        <name>L-glutamate</name>
        <dbReference type="ChEBI" id="CHEBI:29985"/>
    </ligand>
</feature>
<feature type="binding site" evidence="1">
    <location>
        <position position="432"/>
    </location>
    <ligand>
        <name>L-glutamate</name>
        <dbReference type="ChEBI" id="CHEBI:29985"/>
    </ligand>
</feature>
<feature type="binding site" evidence="1">
    <location>
        <begin position="464"/>
        <end position="465"/>
    </location>
    <ligand>
        <name>L-glutamate</name>
        <dbReference type="ChEBI" id="CHEBI:29985"/>
    </ligand>
</feature>
<feature type="glycosylation site" description="N-linked (GlcNAc...) asparagine" evidence="3">
    <location>
        <position position="135"/>
    </location>
</feature>
<feature type="glycosylation site" description="N-linked (GlcNAc...) asparagine" evidence="3">
    <location>
        <position position="270"/>
    </location>
</feature>
<feature type="glycosylation site" description="N-linked (GlcNAc...) asparagine" evidence="3">
    <location>
        <position position="389"/>
    </location>
</feature>
<feature type="glycosylation site" description="N-linked (GlcNAc...) asparagine" evidence="3">
    <location>
        <position position="534"/>
    </location>
</feature>
<name>USTH_ASPFN</name>
<reference key="1">
    <citation type="journal article" date="2015" name="Genome Announc.">
        <title>Genome sequence of Aspergillus flavus NRRL 3357, a strain that causes aflatoxin contamination of food and feed.</title>
        <authorList>
            <person name="Nierman W.C."/>
            <person name="Yu J."/>
            <person name="Fedorova-Abrams N.D."/>
            <person name="Losada L."/>
            <person name="Cleveland T.E."/>
            <person name="Bhatnagar D."/>
            <person name="Bennett J.W."/>
            <person name="Dean R."/>
            <person name="Payne G.A."/>
        </authorList>
    </citation>
    <scope>NUCLEOTIDE SEQUENCE [LARGE SCALE GENOMIC DNA]</scope>
    <source>
        <strain>ATCC 200026 / FGSC A1120 / IAM 13836 / NRRL 3357 / JCM 12722 / SRRC 167</strain>
    </source>
</reference>
<reference key="2">
    <citation type="journal article" date="2014" name="Fungal Genet. Biol.">
        <title>Characterization of the biosynthetic gene cluster for the ribosomally synthesized cyclic peptide ustiloxin B in Aspergillus flavus.</title>
        <authorList>
            <person name="Umemura M."/>
            <person name="Nagano N."/>
            <person name="Koike H."/>
            <person name="Kawano J."/>
            <person name="Ishii T."/>
            <person name="Miyamura Y."/>
            <person name="Kikuchi M."/>
            <person name="Tamano K."/>
            <person name="Yu J."/>
            <person name="Shin-ya K."/>
            <person name="Machida M."/>
        </authorList>
    </citation>
    <scope>FUNCTION</scope>
    <scope>DISRUPTION PHENOTYPE</scope>
</reference>
<reference key="3">
    <citation type="journal article" date="2016" name="Angew. Chem. Int. Ed.">
        <title>Unveiling the biosynthetic pathway of the ribosomally synthesized and post-translationally modified peptide ustiloxin B in filamentous fungi.</title>
        <authorList>
            <person name="Ye Y."/>
            <person name="Minami A."/>
            <person name="Igarashi Y."/>
            <person name="Izumikawa M."/>
            <person name="Umemura M."/>
            <person name="Nagano N."/>
            <person name="Machida M."/>
            <person name="Kawahara T."/>
            <person name="Shin-Ya K."/>
            <person name="Gomi K."/>
            <person name="Oikawa H."/>
        </authorList>
    </citation>
    <scope>FUNCTION</scope>
</reference>
<reference key="4">
    <citation type="journal article" date="2016" name="Fungal Genet. Biol.">
        <title>Class of cyclic ribosomal peptide synthetic genes in filamentous fungi.</title>
        <authorList>
            <person name="Nagano N."/>
            <person name="Umemura M."/>
            <person name="Izumikawa M."/>
            <person name="Kawano J."/>
            <person name="Ishii T."/>
            <person name="Kikuchi M."/>
            <person name="Tomii K."/>
            <person name="Kumagai T."/>
            <person name="Yoshimi A."/>
            <person name="Machida M."/>
            <person name="Abe K."/>
            <person name="Shin-ya K."/>
            <person name="Asai K."/>
        </authorList>
    </citation>
    <scope>FUNCTION</scope>
    <scope>DISRUPTION PHENOTYPE</scope>
</reference>
<proteinExistence type="inferred from homology"/>
<sequence>MASKWIEEQPLVHRRDIRISSKSRIAAGLLVLLVLWRYGLPSSIHFGFSSEEPKQLGAVASEHALCSRYGADMLERGGNAADAMVATMFCIGVVGMYHSGIGGGGFMLIKSPDGDFEFVDFRETAPAAIVALGKNTSAGLRSGVPGEVRGLEYLHRKYGVLPWSVVLEPAIRTARDGFLVQEDLVNYIDMAVEETGEDFLSKHPSWAVDFSPSGSRVRLGDTMTRRRLAATLERISVDGPDAFYSGPIAEDMVASLRNVGGIMTLEDLANYTVVTRDTSHIDYRGYQITSTTAPSSGTIAMNILKVLDTYDEFFTPGTTELSTHRMIEAMKFAFGLRTRLGDPSFVHGMEEYENHILSAEMIDHIRQSISDSHTQDTSAYNPDGLEVVNSTGTAHIATVDHQGLAISATTTINRLFGNQIMCDRTGIIMNNEMDDFSVPTSSPPTFGHTPSSTNFAEPGKRPLSAISPAIILHPDGSLFLIAGSAGSNWITTTTVQNIISGIDQNLAAQEILATPRVHHQLIPNHAIFETTYDNGTVDFLSQLGHEVTWYPPAASMAHLIRVNADGGFDPAGDPRLKNSGGVVALQRRKFW</sequence>
<accession>B8NM71</accession>
<comment type="function">
    <text evidence="4 5 6">Gamma-glutamyltransferase; part of the gene cluster that mediates the biosynthesis of the secondary metabolite ustiloxin B, an antimitotic tetrapeptide (PubMed:24841822, PubMed:26703898, PubMed:27166860). First, ustA is processed by the subtilisin-like endoprotease Kex2 that is outside the ustiloxin B gene cluster, at the C-terminal side of Arg-Lys, after transfer to Golgi apparatus through the endoplasmic reticulum (ER) (PubMed:24841822). Cleavage by KEX2 generates 16 peptides YAIG-I to YAIG-XVI (PubMed:24841822). To process the precursor peptide further, at least two peptidases are necessary to cleave the N-terminal and C-terminal sides of the Tyr-Ala-Ile-Gly core peptide which serves as backbone for the synthesis of ustiloxin B, through cyclization and modification of the tyrosine with a non-protein coding amino acid, norvaline (PubMed:24841822). One of the two peptidases must be the serine peptidase ustP; and the other pepdidase is probably ustH (PubMed:24841822). Macrocyclization of the core peptide derived from ustA requires the tyrosinase ustQ, as well as the homologous oxidases ustYa and ustYb, and leads to the production of the first cyclization product N-desmethylustiloxin F (PubMed:26703898, PubMed:27166860). For the formation of N-desmethylustiloxin F, three oxidation steps are required, hydroxylation at the benzylic position, hydroxylation at either the aromatic ring of Tyr or beta-position of Ile, and oxidative cyclization (PubMed:27166860). UstQ may catalyze the oxidation of a phenol moiety, whereas the ustYa and ustYb are most likely responsible for the remaining two-step oxidations (PubMed:27166860). N-desmethylustiloxin F is then methylated by ustM to yield ustiloxin F which in turn substrate of the cytochrome P450 monooxygenase ustC which catalyzes the formation of S-deoxyustiloxin H (PubMed:27166860). The flavoprotein monooxygenases ustF1 and ustF2 then participate in the modification of the side chain of S-deoxyustiloxin H, leading to the synthesis of an oxime intermediate, via ustiloxin H (PubMed:27166860). Finally, carboxylative dehydration performed by the cysteine desulfurase-like protein ustD yields ustiloxin B (PubMed:27166860).</text>
</comment>
<comment type="catalytic activity">
    <reaction evidence="1">
        <text>an N-terminal (5-L-glutamyl)-[peptide] + an alpha-amino acid = 5-L-glutamyl amino acid + an N-terminal L-alpha-aminoacyl-[peptide]</text>
        <dbReference type="Rhea" id="RHEA:23904"/>
        <dbReference type="Rhea" id="RHEA-COMP:9780"/>
        <dbReference type="Rhea" id="RHEA-COMP:9795"/>
        <dbReference type="ChEBI" id="CHEBI:77644"/>
        <dbReference type="ChEBI" id="CHEBI:78597"/>
        <dbReference type="ChEBI" id="CHEBI:78599"/>
        <dbReference type="ChEBI" id="CHEBI:78608"/>
        <dbReference type="EC" id="2.3.2.2"/>
    </reaction>
</comment>
<comment type="catalytic activity">
    <reaction evidence="1">
        <text>glutathione + H2O = L-cysteinylglycine + L-glutamate</text>
        <dbReference type="Rhea" id="RHEA:28807"/>
        <dbReference type="ChEBI" id="CHEBI:15377"/>
        <dbReference type="ChEBI" id="CHEBI:29985"/>
        <dbReference type="ChEBI" id="CHEBI:57925"/>
        <dbReference type="ChEBI" id="CHEBI:61694"/>
        <dbReference type="EC" id="3.4.19.13"/>
    </reaction>
</comment>
<comment type="catalytic activity">
    <reaction evidence="1">
        <text>an S-substituted glutathione + H2O = an S-substituted L-cysteinylglycine + L-glutamate</text>
        <dbReference type="Rhea" id="RHEA:59468"/>
        <dbReference type="ChEBI" id="CHEBI:15377"/>
        <dbReference type="ChEBI" id="CHEBI:29985"/>
        <dbReference type="ChEBI" id="CHEBI:90779"/>
        <dbReference type="ChEBI" id="CHEBI:143103"/>
        <dbReference type="EC" id="3.4.19.13"/>
    </reaction>
</comment>
<comment type="pathway">
    <text evidence="5">Mycotoxin biosynthesis.</text>
</comment>
<comment type="disruption phenotype">
    <text evidence="4 5">Does not alter the production of ustiloxin B (PubMed:24841822, PubMed:26703898).</text>
</comment>
<comment type="similarity">
    <text evidence="8">Belongs to the gamma-glutamyltransferase family.</text>
</comment>
<protein>
    <recommendedName>
        <fullName>Glutathione hydrolase</fullName>
        <ecNumber evidence="1">3.4.19.13</ecNumber>
    </recommendedName>
    <alternativeName>
        <fullName evidence="7">Gamma-glutamyltransferase ustH</fullName>
        <ecNumber evidence="1">2.3.2.2</ecNumber>
    </alternativeName>
    <alternativeName>
        <fullName evidence="7">Ustiloxin B biosynthesis protein H</fullName>
    </alternativeName>
</protein>